<feature type="chain" id="PRO_0000419114" description="dTDP-4-dehydro-6-deoxy-D-allose reductase">
    <location>
        <begin position="1"/>
        <end position="326"/>
    </location>
</feature>
<feature type="active site" description="Proton donor/acceptor" evidence="1">
    <location>
        <position position="160"/>
    </location>
</feature>
<feature type="binding site" evidence="1">
    <location>
        <begin position="15"/>
        <end position="21"/>
    </location>
    <ligand>
        <name>NAD(+)</name>
        <dbReference type="ChEBI" id="CHEBI:57540"/>
    </ligand>
</feature>
<feature type="binding site" evidence="1">
    <location>
        <begin position="129"/>
        <end position="132"/>
    </location>
    <ligand>
        <name>NAD(+)</name>
        <dbReference type="ChEBI" id="CHEBI:57540"/>
    </ligand>
</feature>
<feature type="binding site" evidence="1">
    <location>
        <position position="164"/>
    </location>
    <ligand>
        <name>NAD(+)</name>
        <dbReference type="ChEBI" id="CHEBI:57540"/>
    </ligand>
</feature>
<feature type="binding site" evidence="1">
    <location>
        <begin position="187"/>
        <end position="190"/>
    </location>
    <ligand>
        <name>NAD(+)</name>
        <dbReference type="ChEBI" id="CHEBI:57540"/>
    </ligand>
</feature>
<feature type="site" description="Lowers pKa of active site Tyr" evidence="1">
    <location>
        <position position="164"/>
    </location>
</feature>
<gene>
    <name type="primary">gerKI</name>
    <name type="synonym">gerK1</name>
</gene>
<dbReference type="EC" id="1.1.1.364" evidence="2"/>
<dbReference type="EMBL" id="AY118081">
    <property type="protein sequence ID" value="ABB52541.1"/>
    <property type="molecule type" value="Genomic_DNA"/>
</dbReference>
<dbReference type="SMR" id="Q331Q7"/>
<dbReference type="KEGG" id="ag:ABB52541"/>
<dbReference type="BioCyc" id="MetaCyc:MONOMER-18348"/>
<dbReference type="BRENDA" id="1.1.1.364">
    <property type="organism ID" value="1284"/>
</dbReference>
<dbReference type="GO" id="GO:0016491">
    <property type="term" value="F:oxidoreductase activity"/>
    <property type="evidence" value="ECO:0007669"/>
    <property type="project" value="UniProtKB-KW"/>
</dbReference>
<dbReference type="GO" id="GO:0017000">
    <property type="term" value="P:antibiotic biosynthetic process"/>
    <property type="evidence" value="ECO:0007669"/>
    <property type="project" value="UniProtKB-KW"/>
</dbReference>
<dbReference type="Gene3D" id="3.40.50.720">
    <property type="entry name" value="NAD(P)-binding Rossmann-like Domain"/>
    <property type="match status" value="1"/>
</dbReference>
<dbReference type="InterPro" id="IPR001509">
    <property type="entry name" value="Epimerase_deHydtase"/>
</dbReference>
<dbReference type="InterPro" id="IPR036291">
    <property type="entry name" value="NAD(P)-bd_dom_sf"/>
</dbReference>
<dbReference type="PANTHER" id="PTHR43000">
    <property type="entry name" value="DTDP-D-GLUCOSE 4,6-DEHYDRATASE-RELATED"/>
    <property type="match status" value="1"/>
</dbReference>
<dbReference type="Pfam" id="PF01370">
    <property type="entry name" value="Epimerase"/>
    <property type="match status" value="1"/>
</dbReference>
<dbReference type="SUPFAM" id="SSF51735">
    <property type="entry name" value="NAD(P)-binding Rossmann-fold domains"/>
    <property type="match status" value="1"/>
</dbReference>
<evidence type="ECO:0000250" key="1"/>
<evidence type="ECO:0000269" key="2">
    <source>
    </source>
</evidence>
<evidence type="ECO:0000303" key="3">
    <source>
    </source>
</evidence>
<evidence type="ECO:0000305" key="4"/>
<evidence type="ECO:0000305" key="5">
    <source>
    </source>
</evidence>
<keyword id="KW-0045">Antibiotic biosynthesis</keyword>
<keyword id="KW-0119">Carbohydrate metabolism</keyword>
<keyword id="KW-0520">NAD</keyword>
<keyword id="KW-0560">Oxidoreductase</keyword>
<accession>Q331Q7</accession>
<name>GERKI_STRSQ</name>
<reference key="1">
    <citation type="journal article" date="2006" name="J. Microbiol. Biotechnol.">
        <title>Cloning and characterization of a gene cluster for the production of the polyketide macrolide antibiotic dihydrochalcomycin in Streptomyces sp. KCTC 0041BP.</title>
        <authorList>
            <person name="Jaishy B.P."/>
            <person name="Lim S.K."/>
            <person name="Yoo I.D."/>
            <person name="Yoo J.C."/>
            <person name="Sohng J.K."/>
            <person name="Nam D.H."/>
        </authorList>
    </citation>
    <scope>NUCLEOTIDE SEQUENCE [GENOMIC DNA]</scope>
    <source>
        <strain>KCTC 0041BP / GERI-155</strain>
    </source>
</reference>
<reference key="2">
    <citation type="journal article" date="2007" name="Glycobiology">
        <title>Biosynthesis of dTDP-6-deoxy-beta-D-allose, biochemical characterization of dTDP-4-keto-6-deoxyglucose reductase (GerKI) from Streptomyces sp. KCTC 0041BP.</title>
        <authorList>
            <person name="Thuy T.T."/>
            <person name="Liou K."/>
            <person name="Oh T.J."/>
            <person name="Kim D.H."/>
            <person name="Nam D.H."/>
            <person name="Yoo J.C."/>
            <person name="Sohng J.K."/>
        </authorList>
    </citation>
    <scope>FUNCTION</scope>
    <scope>CATALYTIC ACTIVITY</scope>
    <scope>SUBSTRATE SPECIFICITY</scope>
    <source>
        <strain>KCTC 0041BP / GERI-155</strain>
    </source>
</reference>
<protein>
    <recommendedName>
        <fullName evidence="5">dTDP-4-dehydro-6-deoxy-D-allose reductase</fullName>
        <ecNumber evidence="2">1.1.1.364</ecNumber>
    </recommendedName>
    <alternativeName>
        <fullName evidence="4">dTDP-4-dehydro-6-deoxy-alpha-D-gulose 4-ketoreductase</fullName>
    </alternativeName>
    <alternativeName>
        <fullName evidence="3">dTDP-4-keto-6-deoxy-D-hexose reductase GerKI</fullName>
    </alternativeName>
    <alternativeName>
        <fullName evidence="3">dTDP-4-keto-6-deoxyallose reductase</fullName>
    </alternativeName>
</protein>
<comment type="function">
    <text evidence="2">Catalyzes the stereospecific reduction of the C-4 keto group of dTDP-4-dehydro-6-deoxy-D-allose, leading to dTDP-6-deoxy-D-allose, an intermediate in the biosynthesis of the mycinose moiety of dihydrochalcomycin (GERI-155) antibiotic. Cannot directly reduce dTDP-4-dehydro-6-deoxyglucose, and thus acts after the epimerization step catalyzed by GerF.</text>
</comment>
<comment type="catalytic activity">
    <reaction evidence="2">
        <text>dTDP-6-deoxy-alpha-D-allose + NAD(+) = dTDP-4-dehydro-6-deoxy-alpha-D-allose + NADH + H(+)</text>
        <dbReference type="Rhea" id="RHEA:36679"/>
        <dbReference type="ChEBI" id="CHEBI:15378"/>
        <dbReference type="ChEBI" id="CHEBI:57540"/>
        <dbReference type="ChEBI" id="CHEBI:57945"/>
        <dbReference type="ChEBI" id="CHEBI:74143"/>
        <dbReference type="ChEBI" id="CHEBI:76253"/>
        <dbReference type="EC" id="1.1.1.364"/>
    </reaction>
</comment>
<comment type="catalytic activity">
    <reaction evidence="2">
        <text>dTDP-6-deoxy-alpha-D-allose + NADP(+) = dTDP-4-dehydro-6-deoxy-alpha-D-allose + NADPH + H(+)</text>
        <dbReference type="Rhea" id="RHEA:39883"/>
        <dbReference type="ChEBI" id="CHEBI:15378"/>
        <dbReference type="ChEBI" id="CHEBI:57783"/>
        <dbReference type="ChEBI" id="CHEBI:58349"/>
        <dbReference type="ChEBI" id="CHEBI:74143"/>
        <dbReference type="ChEBI" id="CHEBI:76253"/>
        <dbReference type="EC" id="1.1.1.364"/>
    </reaction>
</comment>
<comment type="similarity">
    <text evidence="4">Belongs to the NAD(P)-dependent epimerase/dehydratase family.</text>
</comment>
<comment type="caution">
    <text evidence="4">Although PubMed:17053005 refers to the biosynthesis of dTDP-6-deoxy-beta-D-allose, it seems it is the alpha anomer which is produced by GerKI and involved in dihydrochalcomycin biosynthesis, as shown by the NMR analysis of this compound made in the same article.</text>
</comment>
<sequence>MTADRWAGRTVLVTGALGFIGSHFVRQLDARGAEVLALYRTERPEIQAELAALNRVRLVRTELRDESDVRGAFKYLAPSIDTVVHCAAMDGNAQFKLERSAEILDSNQRTISNLLNCVRDFGVGEVVVMSSSELYSASPTVAAREEDDFRRSMRYTDNGYVLSKTYGEILARLHREQFGTNVFLVRPGNVYGPGDGFDCSRGRVIPSMLAKADAGEEIEIWGDGSQTRSFVHVADLVRASLRLLETGKYPEMNVAGAEQVSILELAGMVMAVLGRPERIRLDPSRPVGAPSRLLDLSRMSEVIDFDPQPLRAGLEETARWYRLHKR</sequence>
<proteinExistence type="evidence at protein level"/>
<organism>
    <name type="scientific">Streptomyces sp</name>
    <dbReference type="NCBI Taxonomy" id="1931"/>
    <lineage>
        <taxon>Bacteria</taxon>
        <taxon>Bacillati</taxon>
        <taxon>Actinomycetota</taxon>
        <taxon>Actinomycetes</taxon>
        <taxon>Kitasatosporales</taxon>
        <taxon>Streptomycetaceae</taxon>
        <taxon>Streptomyces</taxon>
    </lineage>
</organism>